<reference key="1">
    <citation type="journal article" date="1990" name="Biochemistry">
        <title>Purification and spectral study of a microbial fatty acyltransferase: activation by limited proteolysis.</title>
        <authorList>
            <person name="Hilton S."/>
            <person name="McCubbin W.D."/>
            <person name="Kay C.M."/>
            <person name="Buckley J.T."/>
        </authorList>
    </citation>
    <scope>NUCLEOTIDE SEQUENCE [GENOMIC DNA]</scope>
    <source>
        <strain>Ah65</strain>
    </source>
</reference>
<reference key="2">
    <citation type="journal article" date="1988" name="Biochim. Biophys. Acta">
        <title>Molecular cloning of a phospholipid-cholesterol acyltransferase from Aeromonas hydrophila. Sequence homologies with lecithin-cholesterol acyltransferase and other lipases.</title>
        <authorList>
            <person name="Thornton J."/>
            <person name="Howard S.P."/>
            <person name="Buckley J.T."/>
        </authorList>
    </citation>
    <scope>NUCLEOTIDE SEQUENCE [GENOMIC DNA]</scope>
    <source>
        <strain>Ah65</strain>
    </source>
</reference>
<reference key="3">
    <citation type="journal article" date="1991" name="J. Biol. Chem.">
        <title>Studies on the reaction mechanism of a microbial lipase/acyltransferase using chemical modification and site-directed mutagenesis.</title>
        <authorList>
            <person name="Hilton S."/>
            <person name="Buckley J.T."/>
        </authorList>
    </citation>
    <scope>MUTAGENESIS</scope>
    <scope>ACTIVE SITE</scope>
</reference>
<reference key="4">
    <citation type="journal article" date="1994" name="J. Biol. Chem.">
        <title>Influence of active site and tyrosine modification on the secretion and activity of the Aeromonas hydrophila lipase/acyltransferase.</title>
        <authorList>
            <person name="Robertson D.L."/>
            <person name="Hilton S."/>
            <person name="Wong K.R."/>
            <person name="Koepke A."/>
            <person name="Buckley J.T."/>
        </authorList>
    </citation>
    <scope>MUTAGENESIS</scope>
</reference>
<organism>
    <name type="scientific">Aeromonas hydrophila</name>
    <dbReference type="NCBI Taxonomy" id="644"/>
    <lineage>
        <taxon>Bacteria</taxon>
        <taxon>Pseudomonadati</taxon>
        <taxon>Pseudomonadota</taxon>
        <taxon>Gammaproteobacteria</taxon>
        <taxon>Aeromonadales</taxon>
        <taxon>Aeromonadaceae</taxon>
        <taxon>Aeromonas</taxon>
    </lineage>
</organism>
<comment type="function">
    <text>Fatty acid transfer between phosphatidylcholine and cholesterol.</text>
</comment>
<comment type="catalytic activity">
    <reaction>
        <text>a sterol + a 1,2-diacyl-sn-glycero-3-phosphocholine = a sterol ester + a 1-acyl-sn-glycero-3-phosphocholine</text>
        <dbReference type="Rhea" id="RHEA:21204"/>
        <dbReference type="ChEBI" id="CHEBI:15889"/>
        <dbReference type="ChEBI" id="CHEBI:35915"/>
        <dbReference type="ChEBI" id="CHEBI:57643"/>
        <dbReference type="ChEBI" id="CHEBI:58168"/>
        <dbReference type="EC" id="2.3.1.43"/>
    </reaction>
</comment>
<comment type="similarity">
    <text evidence="3">Belongs to the 'GDSL' lipolytic enzyme family.</text>
</comment>
<comment type="sequence caution" evidence="3">
    <conflict type="frameshift">
        <sequence resource="EMBL-CDS" id="CAA30260"/>
    </conflict>
</comment>
<sequence length="335" mass="37067">MKKWFVCLLGLVALTVQAADSRPAFSRIVMFGDSLSDTGKMYSKMRGYLPSSPPYYEGRFSNGPVWLEQLTNEFPGLTIANEAEGGPTAVAYNKISWNPKYQVINNLDYEVTQFLQKDSFKPDDLVILWVGANDYLAYGWNTEQDAKRVRDAISDAANRMVLNGAKEILLFNLPDLGQNPSARSQKVVEAASHVSAYHNQLLLNLARQLAPTGMVKLFEIDKQFAEMLRDPQNFGLSDTENACYGGSYVWKPFASRSASTDSQLSAFNPQERLAIAGNPLLAQAVASPMAARSASTLNCEGKMFWDQVHPTTVVHAALSEPAATFIESQYEFLAH</sequence>
<proteinExistence type="evidence at protein level"/>
<protein>
    <recommendedName>
        <fullName>Phosphatidylcholine-sterol acyltransferase</fullName>
        <ecNumber>2.3.1.43</ecNumber>
    </recommendedName>
    <alternativeName>
        <fullName>Glycerophospholipid-cholesterol acyltransferase</fullName>
        <shortName>GCAT</shortName>
    </alternativeName>
</protein>
<feature type="signal peptide" evidence="2">
    <location>
        <begin position="1"/>
        <end position="18"/>
    </location>
</feature>
<feature type="chain" id="PRO_0000017844" description="Phosphatidylcholine-sterol acyltransferase">
    <location>
        <begin position="19"/>
        <end position="335"/>
    </location>
</feature>
<feature type="active site" description="Nucleophile" evidence="1">
    <location>
        <position position="34"/>
    </location>
</feature>
<feature type="active site" evidence="1">
    <location>
        <position position="306"/>
    </location>
</feature>
<feature type="active site" evidence="1">
    <location>
        <position position="309"/>
    </location>
</feature>
<feature type="mutagenesis site" description="Loss of activity.">
    <original>S</original>
    <variation>N</variation>
    <location>
        <position position="34"/>
    </location>
</feature>
<feature type="mutagenesis site" description="Loss of activity.">
    <original>S</original>
    <variation>G</variation>
    <location>
        <position position="36"/>
    </location>
</feature>
<evidence type="ECO:0000250" key="1"/>
<evidence type="ECO:0000255" key="2"/>
<evidence type="ECO:0000305" key="3"/>
<keyword id="KW-0012">Acyltransferase</keyword>
<keyword id="KW-0153">Cholesterol metabolism</keyword>
<keyword id="KW-0443">Lipid metabolism</keyword>
<keyword id="KW-0732">Signal</keyword>
<keyword id="KW-0753">Steroid metabolism</keyword>
<keyword id="KW-1207">Sterol metabolism</keyword>
<keyword id="KW-0808">Transferase</keyword>
<name>GCAT_AERHY</name>
<dbReference type="EC" id="2.3.1.43"/>
<dbReference type="EMBL" id="X07279">
    <property type="protein sequence ID" value="CAA30260.1"/>
    <property type="status" value="ALT_FRAME"/>
    <property type="molecule type" value="Genomic_DNA"/>
</dbReference>
<dbReference type="PIR" id="A36035">
    <property type="entry name" value="XXFOGA"/>
</dbReference>
<dbReference type="SMR" id="P10480"/>
<dbReference type="eggNOG" id="COG3240">
    <property type="taxonomic scope" value="Bacteria"/>
</dbReference>
<dbReference type="GO" id="GO:0016298">
    <property type="term" value="F:lipase activity"/>
    <property type="evidence" value="ECO:0007669"/>
    <property type="project" value="InterPro"/>
</dbReference>
<dbReference type="GO" id="GO:0004607">
    <property type="term" value="F:phosphatidylcholine-sterol O-acyltransferase activity"/>
    <property type="evidence" value="ECO:0007669"/>
    <property type="project" value="UniProtKB-EC"/>
</dbReference>
<dbReference type="GO" id="GO:0008203">
    <property type="term" value="P:cholesterol metabolic process"/>
    <property type="evidence" value="ECO:0007669"/>
    <property type="project" value="UniProtKB-KW"/>
</dbReference>
<dbReference type="CDD" id="cd01846">
    <property type="entry name" value="fatty_acyltransferase_like"/>
    <property type="match status" value="1"/>
</dbReference>
<dbReference type="Gene3D" id="3.40.50.1110">
    <property type="entry name" value="SGNH hydrolase"/>
    <property type="match status" value="1"/>
</dbReference>
<dbReference type="InterPro" id="IPR001087">
    <property type="entry name" value="GDSL"/>
</dbReference>
<dbReference type="InterPro" id="IPR008265">
    <property type="entry name" value="Lipase_GDSL_AS"/>
</dbReference>
<dbReference type="InterPro" id="IPR036514">
    <property type="entry name" value="SGNH_hydro_sf"/>
</dbReference>
<dbReference type="PANTHER" id="PTHR22835:SF659">
    <property type="entry name" value="GDSL LIPASE_ACYLHYDROLASE, PUTATIVE (AFU_ORTHOLOGUE AFUA_2G00510)-RELATED"/>
    <property type="match status" value="1"/>
</dbReference>
<dbReference type="PANTHER" id="PTHR22835">
    <property type="entry name" value="ZINC FINGER FYVE DOMAIN CONTAINING PROTEIN"/>
    <property type="match status" value="1"/>
</dbReference>
<dbReference type="Pfam" id="PF00657">
    <property type="entry name" value="Lipase_GDSL"/>
    <property type="match status" value="1"/>
</dbReference>
<dbReference type="SUPFAM" id="SSF52266">
    <property type="entry name" value="SGNH hydrolase"/>
    <property type="match status" value="1"/>
</dbReference>
<dbReference type="PROSITE" id="PS01098">
    <property type="entry name" value="LIPASE_GDSL_SER"/>
    <property type="match status" value="1"/>
</dbReference>
<accession>P10480</accession>